<name>LPLT_SALA4</name>
<dbReference type="EMBL" id="CP001138">
    <property type="protein sequence ID" value="ACH51354.1"/>
    <property type="molecule type" value="Genomic_DNA"/>
</dbReference>
<dbReference type="RefSeq" id="WP_000004686.1">
    <property type="nucleotide sequence ID" value="NC_011149.1"/>
</dbReference>
<dbReference type="SMR" id="B5F4V3"/>
<dbReference type="KEGG" id="sea:SeAg_B3156"/>
<dbReference type="HOGENOM" id="CLU_047399_0_0_6"/>
<dbReference type="Proteomes" id="UP000008819">
    <property type="component" value="Chromosome"/>
</dbReference>
<dbReference type="GO" id="GO:0005886">
    <property type="term" value="C:plasma membrane"/>
    <property type="evidence" value="ECO:0007669"/>
    <property type="project" value="UniProtKB-SubCell"/>
</dbReference>
<dbReference type="GO" id="GO:0051978">
    <property type="term" value="F:lysophospholipid:sodium symporter activity"/>
    <property type="evidence" value="ECO:0007669"/>
    <property type="project" value="InterPro"/>
</dbReference>
<dbReference type="CDD" id="cd06173">
    <property type="entry name" value="MFS_MefA_like"/>
    <property type="match status" value="1"/>
</dbReference>
<dbReference type="Gene3D" id="1.20.1250.20">
    <property type="entry name" value="MFS general substrate transporter like domains"/>
    <property type="match status" value="1"/>
</dbReference>
<dbReference type="HAMAP" id="MF_01585">
    <property type="entry name" value="MFS_LplT"/>
    <property type="match status" value="1"/>
</dbReference>
<dbReference type="InterPro" id="IPR023727">
    <property type="entry name" value="LysoPLipid__transptr_LplT"/>
</dbReference>
<dbReference type="InterPro" id="IPR011701">
    <property type="entry name" value="MFS"/>
</dbReference>
<dbReference type="InterPro" id="IPR036259">
    <property type="entry name" value="MFS_trans_sf"/>
</dbReference>
<dbReference type="NCBIfam" id="NF008397">
    <property type="entry name" value="PRK11195.1"/>
    <property type="match status" value="1"/>
</dbReference>
<dbReference type="PANTHER" id="PTHR43266">
    <property type="entry name" value="MACROLIDE-EFFLUX PROTEIN"/>
    <property type="match status" value="1"/>
</dbReference>
<dbReference type="PANTHER" id="PTHR43266:SF2">
    <property type="entry name" value="MAJOR FACILITATOR SUPERFAMILY (MFS) PROFILE DOMAIN-CONTAINING PROTEIN"/>
    <property type="match status" value="1"/>
</dbReference>
<dbReference type="Pfam" id="PF07690">
    <property type="entry name" value="MFS_1"/>
    <property type="match status" value="1"/>
</dbReference>
<dbReference type="SUPFAM" id="SSF103473">
    <property type="entry name" value="MFS general substrate transporter"/>
    <property type="match status" value="1"/>
</dbReference>
<evidence type="ECO:0000255" key="1">
    <source>
        <dbReference type="HAMAP-Rule" id="MF_01585"/>
    </source>
</evidence>
<comment type="function">
    <text evidence="1">Catalyzes the facilitated diffusion of 2-acyl-glycero-3-phosphoethanolamine (2-acyl-GPE) into the cell.</text>
</comment>
<comment type="subcellular location">
    <subcellularLocation>
        <location evidence="1">Cell inner membrane</location>
        <topology evidence="1">Multi-pass membrane protein</topology>
    </subcellularLocation>
</comment>
<comment type="similarity">
    <text evidence="1">Belongs to the major facilitator superfamily. LplT (TC 2.A.1.42) family.</text>
</comment>
<proteinExistence type="inferred from homology"/>
<gene>
    <name evidence="1" type="primary">lplT</name>
    <name type="ordered locus">SeAg_B3156</name>
</gene>
<keyword id="KW-0997">Cell inner membrane</keyword>
<keyword id="KW-1003">Cell membrane</keyword>
<keyword id="KW-0445">Lipid transport</keyword>
<keyword id="KW-0472">Membrane</keyword>
<keyword id="KW-0812">Transmembrane</keyword>
<keyword id="KW-1133">Transmembrane helix</keyword>
<keyword id="KW-0813">Transport</keyword>
<protein>
    <recommendedName>
        <fullName evidence="1">Lysophospholipid transporter LplT</fullName>
    </recommendedName>
</protein>
<sequence length="400" mass="41571">MSESVRTNTSIWSKGMLSVIVAQFLSAFGDNALLFATLALLKAQFYPDWSQPVLQMVFVGAYILFAPFVGQIADSFAKGRVMMVANGLKLAGAAGICLGVNPFVGYTLVGIGAAAYSPAKYGILGELTTGDKLVKANGLMEASTIAAILLGSVAGGVLADWHVIAALVACALAYAGAVAANLFIPKLVAARPGQSWRLSAMTRSFFSACVVLWRNGETRFSLVGTGLFWGAGVTLRFLLVLWVPVALGITDNATPTYLNAMVAVGIVVGAGAAAKLVTLETVSRCMPAGILIGVVVAIFSLQHALLPAYALLLLIGMLGGFFVVPLNALLQERGKKSVGAGNAIAVQNLGENSAMLLMLGLYSLAVLVGVPAVAIGIGFGVLFALAIAALWIWQRRQASY</sequence>
<feature type="chain" id="PRO_1000201273" description="Lysophospholipid transporter LplT">
    <location>
        <begin position="1"/>
        <end position="400"/>
    </location>
</feature>
<feature type="transmembrane region" description="Helical" evidence="1">
    <location>
        <begin position="19"/>
        <end position="39"/>
    </location>
</feature>
<feature type="transmembrane region" description="Helical" evidence="1">
    <location>
        <begin position="53"/>
        <end position="73"/>
    </location>
</feature>
<feature type="transmembrane region" description="Helical" evidence="1">
    <location>
        <begin position="91"/>
        <end position="111"/>
    </location>
</feature>
<feature type="transmembrane region" description="Helical" evidence="1">
    <location>
        <begin position="139"/>
        <end position="159"/>
    </location>
</feature>
<feature type="transmembrane region" description="Helical" evidence="1">
    <location>
        <begin position="164"/>
        <end position="184"/>
    </location>
</feature>
<feature type="transmembrane region" description="Helical" evidence="1">
    <location>
        <begin position="195"/>
        <end position="213"/>
    </location>
</feature>
<feature type="transmembrane region" description="Helical" evidence="1">
    <location>
        <begin position="227"/>
        <end position="247"/>
    </location>
</feature>
<feature type="transmembrane region" description="Helical" evidence="1">
    <location>
        <begin position="257"/>
        <end position="277"/>
    </location>
</feature>
<feature type="transmembrane region" description="Helical" evidence="1">
    <location>
        <begin position="281"/>
        <end position="301"/>
    </location>
</feature>
<feature type="transmembrane region" description="Helical" evidence="1">
    <location>
        <begin position="304"/>
        <end position="324"/>
    </location>
</feature>
<feature type="transmembrane region" description="Helical" evidence="1">
    <location>
        <begin position="352"/>
        <end position="372"/>
    </location>
</feature>
<feature type="transmembrane region" description="Helical" evidence="1">
    <location>
        <begin position="373"/>
        <end position="393"/>
    </location>
</feature>
<organism>
    <name type="scientific">Salmonella agona (strain SL483)</name>
    <dbReference type="NCBI Taxonomy" id="454166"/>
    <lineage>
        <taxon>Bacteria</taxon>
        <taxon>Pseudomonadati</taxon>
        <taxon>Pseudomonadota</taxon>
        <taxon>Gammaproteobacteria</taxon>
        <taxon>Enterobacterales</taxon>
        <taxon>Enterobacteriaceae</taxon>
        <taxon>Salmonella</taxon>
    </lineage>
</organism>
<accession>B5F4V3</accession>
<reference key="1">
    <citation type="journal article" date="2011" name="J. Bacteriol.">
        <title>Comparative genomics of 28 Salmonella enterica isolates: evidence for CRISPR-mediated adaptive sublineage evolution.</title>
        <authorList>
            <person name="Fricke W.F."/>
            <person name="Mammel M.K."/>
            <person name="McDermott P.F."/>
            <person name="Tartera C."/>
            <person name="White D.G."/>
            <person name="Leclerc J.E."/>
            <person name="Ravel J."/>
            <person name="Cebula T.A."/>
        </authorList>
    </citation>
    <scope>NUCLEOTIDE SEQUENCE [LARGE SCALE GENOMIC DNA]</scope>
    <source>
        <strain>SL483</strain>
    </source>
</reference>